<keyword id="KW-0068">Autocatalytic cleavage</keyword>
<keyword id="KW-0963">Cytoplasm</keyword>
<keyword id="KW-0210">Decarboxylase</keyword>
<keyword id="KW-0456">Lyase</keyword>
<keyword id="KW-0566">Pantothenate biosynthesis</keyword>
<keyword id="KW-0670">Pyruvate</keyword>
<keyword id="KW-1185">Reference proteome</keyword>
<keyword id="KW-0704">Schiff base</keyword>
<keyword id="KW-0865">Zymogen</keyword>
<dbReference type="EC" id="4.1.1.11" evidence="1"/>
<dbReference type="EMBL" id="CP001628">
    <property type="protein sequence ID" value="ACS31501.1"/>
    <property type="molecule type" value="Genomic_DNA"/>
</dbReference>
<dbReference type="RefSeq" id="WP_010080090.1">
    <property type="nucleotide sequence ID" value="NC_012803.1"/>
</dbReference>
<dbReference type="SMR" id="C5C713"/>
<dbReference type="STRING" id="465515.Mlut_20270"/>
<dbReference type="EnsemblBacteria" id="ACS31501">
    <property type="protein sequence ID" value="ACS31501"/>
    <property type="gene ID" value="Mlut_20270"/>
</dbReference>
<dbReference type="GeneID" id="93363978"/>
<dbReference type="KEGG" id="mlu:Mlut_20270"/>
<dbReference type="eggNOG" id="COG0853">
    <property type="taxonomic scope" value="Bacteria"/>
</dbReference>
<dbReference type="HOGENOM" id="CLU_115305_2_0_11"/>
<dbReference type="UniPathway" id="UPA00028">
    <property type="reaction ID" value="UER00002"/>
</dbReference>
<dbReference type="Proteomes" id="UP000000738">
    <property type="component" value="Chromosome"/>
</dbReference>
<dbReference type="GO" id="GO:0005829">
    <property type="term" value="C:cytosol"/>
    <property type="evidence" value="ECO:0007669"/>
    <property type="project" value="TreeGrafter"/>
</dbReference>
<dbReference type="GO" id="GO:0004068">
    <property type="term" value="F:aspartate 1-decarboxylase activity"/>
    <property type="evidence" value="ECO:0007669"/>
    <property type="project" value="UniProtKB-UniRule"/>
</dbReference>
<dbReference type="GO" id="GO:0006523">
    <property type="term" value="P:alanine biosynthetic process"/>
    <property type="evidence" value="ECO:0007669"/>
    <property type="project" value="InterPro"/>
</dbReference>
<dbReference type="GO" id="GO:0015940">
    <property type="term" value="P:pantothenate biosynthetic process"/>
    <property type="evidence" value="ECO:0007669"/>
    <property type="project" value="UniProtKB-UniRule"/>
</dbReference>
<dbReference type="CDD" id="cd06919">
    <property type="entry name" value="Asp_decarbox"/>
    <property type="match status" value="1"/>
</dbReference>
<dbReference type="Gene3D" id="2.40.40.20">
    <property type="match status" value="1"/>
</dbReference>
<dbReference type="HAMAP" id="MF_00446">
    <property type="entry name" value="PanD"/>
    <property type="match status" value="1"/>
</dbReference>
<dbReference type="InterPro" id="IPR009010">
    <property type="entry name" value="Asp_de-COase-like_dom_sf"/>
</dbReference>
<dbReference type="InterPro" id="IPR003190">
    <property type="entry name" value="Asp_decarbox"/>
</dbReference>
<dbReference type="NCBIfam" id="TIGR00223">
    <property type="entry name" value="panD"/>
    <property type="match status" value="1"/>
</dbReference>
<dbReference type="PANTHER" id="PTHR21012">
    <property type="entry name" value="ASPARTATE 1-DECARBOXYLASE"/>
    <property type="match status" value="1"/>
</dbReference>
<dbReference type="PANTHER" id="PTHR21012:SF0">
    <property type="entry name" value="ASPARTATE 1-DECARBOXYLASE"/>
    <property type="match status" value="1"/>
</dbReference>
<dbReference type="Pfam" id="PF02261">
    <property type="entry name" value="Asp_decarbox"/>
    <property type="match status" value="1"/>
</dbReference>
<dbReference type="PIRSF" id="PIRSF006246">
    <property type="entry name" value="Asp_decarbox"/>
    <property type="match status" value="1"/>
</dbReference>
<dbReference type="SUPFAM" id="SSF50692">
    <property type="entry name" value="ADC-like"/>
    <property type="match status" value="1"/>
</dbReference>
<feature type="chain" id="PRO_1000206188" description="Aspartate 1-decarboxylase beta chain" evidence="1">
    <location>
        <begin position="1"/>
        <end position="24"/>
    </location>
</feature>
<feature type="chain" id="PRO_1000206189" description="Aspartate 1-decarboxylase alpha chain" evidence="1">
    <location>
        <begin position="25"/>
        <end position="145"/>
    </location>
</feature>
<feature type="active site" description="Schiff-base intermediate with substrate; via pyruvic acid" evidence="1">
    <location>
        <position position="25"/>
    </location>
</feature>
<feature type="active site" description="Proton donor" evidence="1">
    <location>
        <position position="58"/>
    </location>
</feature>
<feature type="binding site" evidence="1">
    <location>
        <position position="57"/>
    </location>
    <ligand>
        <name>substrate</name>
    </ligand>
</feature>
<feature type="binding site" evidence="1">
    <location>
        <begin position="73"/>
        <end position="75"/>
    </location>
    <ligand>
        <name>substrate</name>
    </ligand>
</feature>
<feature type="modified residue" description="Pyruvic acid (Ser)" evidence="1">
    <location>
        <position position="25"/>
    </location>
</feature>
<comment type="function">
    <text evidence="1">Catalyzes the pyruvoyl-dependent decarboxylation of aspartate to produce beta-alanine.</text>
</comment>
<comment type="catalytic activity">
    <reaction evidence="1">
        <text>L-aspartate + H(+) = beta-alanine + CO2</text>
        <dbReference type="Rhea" id="RHEA:19497"/>
        <dbReference type="ChEBI" id="CHEBI:15378"/>
        <dbReference type="ChEBI" id="CHEBI:16526"/>
        <dbReference type="ChEBI" id="CHEBI:29991"/>
        <dbReference type="ChEBI" id="CHEBI:57966"/>
        <dbReference type="EC" id="4.1.1.11"/>
    </reaction>
</comment>
<comment type="cofactor">
    <cofactor evidence="1">
        <name>pyruvate</name>
        <dbReference type="ChEBI" id="CHEBI:15361"/>
    </cofactor>
    <text evidence="1">Binds 1 pyruvoyl group covalently per subunit.</text>
</comment>
<comment type="pathway">
    <text evidence="1">Cofactor biosynthesis; (R)-pantothenate biosynthesis; beta-alanine from L-aspartate: step 1/1.</text>
</comment>
<comment type="subunit">
    <text evidence="1">Heterooctamer of four alpha and four beta subunits.</text>
</comment>
<comment type="subcellular location">
    <subcellularLocation>
        <location evidence="1">Cytoplasm</location>
    </subcellularLocation>
</comment>
<comment type="PTM">
    <text evidence="1">Is synthesized initially as an inactive proenzyme, which is activated by self-cleavage at a specific serine bond to produce a beta-subunit with a hydroxyl group at its C-terminus and an alpha-subunit with a pyruvoyl group at its N-terminus.</text>
</comment>
<comment type="similarity">
    <text evidence="1">Belongs to the PanD family.</text>
</comment>
<protein>
    <recommendedName>
        <fullName evidence="1">Aspartate 1-decarboxylase</fullName>
        <ecNumber evidence="1">4.1.1.11</ecNumber>
    </recommendedName>
    <alternativeName>
        <fullName evidence="1">Aspartate alpha-decarboxylase</fullName>
    </alternativeName>
    <component>
        <recommendedName>
            <fullName evidence="1">Aspartate 1-decarboxylase beta chain</fullName>
        </recommendedName>
    </component>
    <component>
        <recommendedName>
            <fullName evidence="1">Aspartate 1-decarboxylase alpha chain</fullName>
        </recommendedName>
    </component>
</protein>
<reference key="1">
    <citation type="journal article" date="2010" name="J. Bacteriol.">
        <title>Genome sequence of the Fleming strain of Micrococcus luteus, a simple free-living actinobacterium.</title>
        <authorList>
            <person name="Young M."/>
            <person name="Artsatbanov V."/>
            <person name="Beller H.R."/>
            <person name="Chandra G."/>
            <person name="Chater K.F."/>
            <person name="Dover L.G."/>
            <person name="Goh E.B."/>
            <person name="Kahan T."/>
            <person name="Kaprelyants A.S."/>
            <person name="Kyrpides N."/>
            <person name="Lapidus A."/>
            <person name="Lowry S.R."/>
            <person name="Lykidis A."/>
            <person name="Mahillon J."/>
            <person name="Markowitz V."/>
            <person name="Mavromatis K."/>
            <person name="Mukamolova G.V."/>
            <person name="Oren A."/>
            <person name="Rokem J.S."/>
            <person name="Smith M.C."/>
            <person name="Young D.I."/>
            <person name="Greenblatt C.L."/>
        </authorList>
    </citation>
    <scope>NUCLEOTIDE SEQUENCE [LARGE SCALE GENOMIC DNA]</scope>
    <source>
        <strain>ATCC 4698 / DSM 20030 / JCM 1464 / CCM 169 / CCUG 5858 / IAM 1056 / NBRC 3333 / NCIMB 9278 / NCTC 2665 / VKM Ac-2230</strain>
    </source>
</reference>
<accession>C5C713</accession>
<gene>
    <name evidence="1" type="primary">panD</name>
    <name type="ordered locus">Mlut_20270</name>
</gene>
<evidence type="ECO:0000255" key="1">
    <source>
        <dbReference type="HAMAP-Rule" id="MF_00446"/>
    </source>
</evidence>
<proteinExistence type="inferred from homology"/>
<sequence length="145" mass="15639">MLRTMFHAKIHRATVTQADLHYVGSVTVDQDLLDAADILPGELVSIVDVTNGARLETYTIAGERGSGVLGINGAAAHLVHPGDIVILIAYGQMDDDEARHFQPKVVHVDADNRIVELGIDPADGLLDGLSRPPLSREWNEAQAEL</sequence>
<name>PAND_MICLC</name>
<organism>
    <name type="scientific">Micrococcus luteus (strain ATCC 4698 / DSM 20030 / JCM 1464 / CCM 169 / CCUG 5858 / IAM 1056 / NBRC 3333 / NCIMB 9278 / NCTC 2665 / VKM Ac-2230)</name>
    <name type="common">Micrococcus lysodeikticus</name>
    <dbReference type="NCBI Taxonomy" id="465515"/>
    <lineage>
        <taxon>Bacteria</taxon>
        <taxon>Bacillati</taxon>
        <taxon>Actinomycetota</taxon>
        <taxon>Actinomycetes</taxon>
        <taxon>Micrococcales</taxon>
        <taxon>Micrococcaceae</taxon>
        <taxon>Micrococcus</taxon>
    </lineage>
</organism>